<reference key="1">
    <citation type="submission" date="2006-10" db="EMBL/GenBank/DDBJ databases">
        <authorList>
            <person name="Fleischmann R.D."/>
            <person name="Dodson R.J."/>
            <person name="Haft D.H."/>
            <person name="Merkel J.S."/>
            <person name="Nelson W.C."/>
            <person name="Fraser C.M."/>
        </authorList>
    </citation>
    <scope>NUCLEOTIDE SEQUENCE [LARGE SCALE GENOMIC DNA]</scope>
    <source>
        <strain>104</strain>
    </source>
</reference>
<comment type="function">
    <text evidence="1">One of the primary rRNA binding proteins, this protein initially binds near the 5'-end of the 23S rRNA. It is important during the early stages of 50S assembly. It makes multiple contacts with different domains of the 23S rRNA in the assembled 50S subunit and ribosome.</text>
</comment>
<comment type="function">
    <text evidence="1">Forms part of the polypeptide exit tunnel.</text>
</comment>
<comment type="subunit">
    <text evidence="1">Part of the 50S ribosomal subunit.</text>
</comment>
<comment type="similarity">
    <text evidence="1">Belongs to the universal ribosomal protein uL4 family.</text>
</comment>
<organism>
    <name type="scientific">Mycobacterium avium (strain 104)</name>
    <dbReference type="NCBI Taxonomy" id="243243"/>
    <lineage>
        <taxon>Bacteria</taxon>
        <taxon>Bacillati</taxon>
        <taxon>Actinomycetota</taxon>
        <taxon>Actinomycetes</taxon>
        <taxon>Mycobacteriales</taxon>
        <taxon>Mycobacteriaceae</taxon>
        <taxon>Mycobacterium</taxon>
        <taxon>Mycobacterium avium complex (MAC)</taxon>
    </lineage>
</organism>
<gene>
    <name evidence="1" type="primary">rplD</name>
    <name type="ordered locus">MAV_4470</name>
</gene>
<protein>
    <recommendedName>
        <fullName evidence="1">Large ribosomal subunit protein uL4</fullName>
    </recommendedName>
    <alternativeName>
        <fullName evidence="3">50S ribosomal protein L4</fullName>
    </alternativeName>
</protein>
<proteinExistence type="inferred from homology"/>
<dbReference type="EMBL" id="CP000479">
    <property type="protein sequence ID" value="ABK68192.1"/>
    <property type="molecule type" value="Genomic_DNA"/>
</dbReference>
<dbReference type="RefSeq" id="WP_009979095.1">
    <property type="nucleotide sequence ID" value="NC_008595.1"/>
</dbReference>
<dbReference type="SMR" id="A0QL17"/>
<dbReference type="GeneID" id="75271984"/>
<dbReference type="KEGG" id="mav:MAV_4470"/>
<dbReference type="HOGENOM" id="CLU_041575_5_0_11"/>
<dbReference type="Proteomes" id="UP000001574">
    <property type="component" value="Chromosome"/>
</dbReference>
<dbReference type="GO" id="GO:1990904">
    <property type="term" value="C:ribonucleoprotein complex"/>
    <property type="evidence" value="ECO:0007669"/>
    <property type="project" value="UniProtKB-KW"/>
</dbReference>
<dbReference type="GO" id="GO:0005840">
    <property type="term" value="C:ribosome"/>
    <property type="evidence" value="ECO:0007669"/>
    <property type="project" value="UniProtKB-KW"/>
</dbReference>
<dbReference type="GO" id="GO:0019843">
    <property type="term" value="F:rRNA binding"/>
    <property type="evidence" value="ECO:0007669"/>
    <property type="project" value="UniProtKB-UniRule"/>
</dbReference>
<dbReference type="GO" id="GO:0003735">
    <property type="term" value="F:structural constituent of ribosome"/>
    <property type="evidence" value="ECO:0007669"/>
    <property type="project" value="InterPro"/>
</dbReference>
<dbReference type="GO" id="GO:0006412">
    <property type="term" value="P:translation"/>
    <property type="evidence" value="ECO:0007669"/>
    <property type="project" value="UniProtKB-UniRule"/>
</dbReference>
<dbReference type="FunFam" id="3.40.1370.10:FF:000004">
    <property type="entry name" value="50S ribosomal protein L4"/>
    <property type="match status" value="1"/>
</dbReference>
<dbReference type="Gene3D" id="3.40.1370.10">
    <property type="match status" value="1"/>
</dbReference>
<dbReference type="HAMAP" id="MF_01328_B">
    <property type="entry name" value="Ribosomal_uL4_B"/>
    <property type="match status" value="1"/>
</dbReference>
<dbReference type="InterPro" id="IPR002136">
    <property type="entry name" value="Ribosomal_uL4"/>
</dbReference>
<dbReference type="InterPro" id="IPR013005">
    <property type="entry name" value="Ribosomal_uL4-like"/>
</dbReference>
<dbReference type="InterPro" id="IPR023574">
    <property type="entry name" value="Ribosomal_uL4_dom_sf"/>
</dbReference>
<dbReference type="NCBIfam" id="TIGR03953">
    <property type="entry name" value="rplD_bact"/>
    <property type="match status" value="1"/>
</dbReference>
<dbReference type="PANTHER" id="PTHR10746">
    <property type="entry name" value="50S RIBOSOMAL PROTEIN L4"/>
    <property type="match status" value="1"/>
</dbReference>
<dbReference type="PANTHER" id="PTHR10746:SF6">
    <property type="entry name" value="LARGE RIBOSOMAL SUBUNIT PROTEIN UL4M"/>
    <property type="match status" value="1"/>
</dbReference>
<dbReference type="Pfam" id="PF00573">
    <property type="entry name" value="Ribosomal_L4"/>
    <property type="match status" value="1"/>
</dbReference>
<dbReference type="SUPFAM" id="SSF52166">
    <property type="entry name" value="Ribosomal protein L4"/>
    <property type="match status" value="1"/>
</dbReference>
<sequence>MALKLDVKAPGGKVEGSIELPAELFDAPANIALMHQVVTAQRAAARQGTHSTKTRGDVSGGGRKPYRQKGTGRARQGSTRAPQFTGGGVVHGPKPRDYSQRTPKKMIAAALRGALSDRARNGRIHAITELVSGQTPSTKSAKAFLGTLTERKQVLVVIGRSDEAGAKSVRNLPGVHILAPDQLNTYDVLRADDVVFSVEALRAYIAANTGTPEEVSA</sequence>
<name>RL4_MYCA1</name>
<keyword id="KW-0687">Ribonucleoprotein</keyword>
<keyword id="KW-0689">Ribosomal protein</keyword>
<keyword id="KW-0694">RNA-binding</keyword>
<keyword id="KW-0699">rRNA-binding</keyword>
<evidence type="ECO:0000255" key="1">
    <source>
        <dbReference type="HAMAP-Rule" id="MF_01328"/>
    </source>
</evidence>
<evidence type="ECO:0000256" key="2">
    <source>
        <dbReference type="SAM" id="MobiDB-lite"/>
    </source>
</evidence>
<evidence type="ECO:0000305" key="3"/>
<feature type="chain" id="PRO_1000052442" description="Large ribosomal subunit protein uL4">
    <location>
        <begin position="1"/>
        <end position="217"/>
    </location>
</feature>
<feature type="region of interest" description="Disordered" evidence="2">
    <location>
        <begin position="42"/>
        <end position="100"/>
    </location>
</feature>
<accession>A0QL17</accession>